<keyword id="KW-0548">Nucleotidyltransferase</keyword>
<keyword id="KW-0694">RNA-binding</keyword>
<keyword id="KW-0698">rRNA processing</keyword>
<keyword id="KW-0808">Transferase</keyword>
<keyword id="KW-0819">tRNA processing</keyword>
<keyword id="KW-0820">tRNA-binding</keyword>
<name>RNPH_BACC2</name>
<gene>
    <name evidence="1" type="primary">rph</name>
    <name type="ordered locus">BCG9842_B0634</name>
</gene>
<feature type="chain" id="PRO_1000129319" description="Ribonuclease PH">
    <location>
        <begin position="1"/>
        <end position="245"/>
    </location>
</feature>
<feature type="binding site" evidence="1">
    <location>
        <position position="86"/>
    </location>
    <ligand>
        <name>phosphate</name>
        <dbReference type="ChEBI" id="CHEBI:43474"/>
        <note>substrate</note>
    </ligand>
</feature>
<feature type="binding site" evidence="1">
    <location>
        <begin position="124"/>
        <end position="126"/>
    </location>
    <ligand>
        <name>phosphate</name>
        <dbReference type="ChEBI" id="CHEBI:43474"/>
        <note>substrate</note>
    </ligand>
</feature>
<evidence type="ECO:0000255" key="1">
    <source>
        <dbReference type="HAMAP-Rule" id="MF_00564"/>
    </source>
</evidence>
<protein>
    <recommendedName>
        <fullName evidence="1">Ribonuclease PH</fullName>
        <shortName evidence="1">RNase PH</shortName>
        <ecNumber evidence="1">2.7.7.56</ecNumber>
    </recommendedName>
    <alternativeName>
        <fullName evidence="1">tRNA nucleotidyltransferase</fullName>
    </alternativeName>
</protein>
<organism>
    <name type="scientific">Bacillus cereus (strain G9842)</name>
    <dbReference type="NCBI Taxonomy" id="405531"/>
    <lineage>
        <taxon>Bacteria</taxon>
        <taxon>Bacillati</taxon>
        <taxon>Bacillota</taxon>
        <taxon>Bacilli</taxon>
        <taxon>Bacillales</taxon>
        <taxon>Bacillaceae</taxon>
        <taxon>Bacillus</taxon>
        <taxon>Bacillus cereus group</taxon>
    </lineage>
</organism>
<dbReference type="EC" id="2.7.7.56" evidence="1"/>
<dbReference type="EMBL" id="CP001186">
    <property type="protein sequence ID" value="ACK97462.1"/>
    <property type="molecule type" value="Genomic_DNA"/>
</dbReference>
<dbReference type="RefSeq" id="WP_001261763.1">
    <property type="nucleotide sequence ID" value="NC_011772.1"/>
</dbReference>
<dbReference type="SMR" id="B7IIZ1"/>
<dbReference type="GeneID" id="72451158"/>
<dbReference type="KEGG" id="bcg:BCG9842_B0634"/>
<dbReference type="HOGENOM" id="CLU_050858_0_0_9"/>
<dbReference type="Proteomes" id="UP000006744">
    <property type="component" value="Chromosome"/>
</dbReference>
<dbReference type="GO" id="GO:0000175">
    <property type="term" value="F:3'-5'-RNA exonuclease activity"/>
    <property type="evidence" value="ECO:0007669"/>
    <property type="project" value="UniProtKB-UniRule"/>
</dbReference>
<dbReference type="GO" id="GO:0000049">
    <property type="term" value="F:tRNA binding"/>
    <property type="evidence" value="ECO:0007669"/>
    <property type="project" value="UniProtKB-UniRule"/>
</dbReference>
<dbReference type="GO" id="GO:0009022">
    <property type="term" value="F:tRNA nucleotidyltransferase activity"/>
    <property type="evidence" value="ECO:0007669"/>
    <property type="project" value="UniProtKB-UniRule"/>
</dbReference>
<dbReference type="GO" id="GO:0016075">
    <property type="term" value="P:rRNA catabolic process"/>
    <property type="evidence" value="ECO:0007669"/>
    <property type="project" value="UniProtKB-UniRule"/>
</dbReference>
<dbReference type="GO" id="GO:0006364">
    <property type="term" value="P:rRNA processing"/>
    <property type="evidence" value="ECO:0007669"/>
    <property type="project" value="UniProtKB-KW"/>
</dbReference>
<dbReference type="GO" id="GO:0008033">
    <property type="term" value="P:tRNA processing"/>
    <property type="evidence" value="ECO:0007669"/>
    <property type="project" value="UniProtKB-UniRule"/>
</dbReference>
<dbReference type="CDD" id="cd11362">
    <property type="entry name" value="RNase_PH_bact"/>
    <property type="match status" value="1"/>
</dbReference>
<dbReference type="FunFam" id="3.30.230.70:FF:000003">
    <property type="entry name" value="Ribonuclease PH"/>
    <property type="match status" value="1"/>
</dbReference>
<dbReference type="Gene3D" id="3.30.230.70">
    <property type="entry name" value="GHMP Kinase, N-terminal domain"/>
    <property type="match status" value="1"/>
</dbReference>
<dbReference type="HAMAP" id="MF_00564">
    <property type="entry name" value="RNase_PH"/>
    <property type="match status" value="1"/>
</dbReference>
<dbReference type="InterPro" id="IPR001247">
    <property type="entry name" value="ExoRNase_PH_dom1"/>
</dbReference>
<dbReference type="InterPro" id="IPR015847">
    <property type="entry name" value="ExoRNase_PH_dom2"/>
</dbReference>
<dbReference type="InterPro" id="IPR036345">
    <property type="entry name" value="ExoRNase_PH_dom2_sf"/>
</dbReference>
<dbReference type="InterPro" id="IPR027408">
    <property type="entry name" value="PNPase/RNase_PH_dom_sf"/>
</dbReference>
<dbReference type="InterPro" id="IPR020568">
    <property type="entry name" value="Ribosomal_Su5_D2-typ_SF"/>
</dbReference>
<dbReference type="InterPro" id="IPR050080">
    <property type="entry name" value="RNase_PH"/>
</dbReference>
<dbReference type="InterPro" id="IPR002381">
    <property type="entry name" value="RNase_PH_bac-type"/>
</dbReference>
<dbReference type="InterPro" id="IPR018336">
    <property type="entry name" value="RNase_PH_CS"/>
</dbReference>
<dbReference type="NCBIfam" id="TIGR01966">
    <property type="entry name" value="RNasePH"/>
    <property type="match status" value="1"/>
</dbReference>
<dbReference type="PANTHER" id="PTHR11953">
    <property type="entry name" value="EXOSOME COMPLEX COMPONENT"/>
    <property type="match status" value="1"/>
</dbReference>
<dbReference type="PANTHER" id="PTHR11953:SF0">
    <property type="entry name" value="EXOSOME COMPLEX COMPONENT RRP41"/>
    <property type="match status" value="1"/>
</dbReference>
<dbReference type="Pfam" id="PF01138">
    <property type="entry name" value="RNase_PH"/>
    <property type="match status" value="1"/>
</dbReference>
<dbReference type="Pfam" id="PF03725">
    <property type="entry name" value="RNase_PH_C"/>
    <property type="match status" value="1"/>
</dbReference>
<dbReference type="SUPFAM" id="SSF55666">
    <property type="entry name" value="Ribonuclease PH domain 2-like"/>
    <property type="match status" value="1"/>
</dbReference>
<dbReference type="SUPFAM" id="SSF54211">
    <property type="entry name" value="Ribosomal protein S5 domain 2-like"/>
    <property type="match status" value="1"/>
</dbReference>
<dbReference type="PROSITE" id="PS01277">
    <property type="entry name" value="RIBONUCLEASE_PH"/>
    <property type="match status" value="1"/>
</dbReference>
<proteinExistence type="inferred from homology"/>
<accession>B7IIZ1</accession>
<sequence>MRVDGREKTELRHIHIHTNYLKHPEGSVLIEVGDTKVICSATIEERVPPFMRGEGKGWVTAEYAMIPRATEQRTIRESSKGKVTGRTMEIQRLIGRALRAVVDLEALGERTVWIDCDVIQADGGTRTASITGAYVAMVLAFEKLLQAEKVSKIPVKDYLAATSVGIVEEQGVVLDLNYAEDSKADVDMNVIMTGKGQFVEVQGTGEEATFSRAQLNELLDAAEKGIFQLIDMQKEALGDIVSHIE</sequence>
<comment type="function">
    <text evidence="1">Phosphorolytic 3'-5' exoribonuclease that plays an important role in tRNA 3'-end maturation. Removes nucleotide residues following the 3'-CCA terminus of tRNAs; can also add nucleotides to the ends of RNA molecules by using nucleoside diphosphates as substrates, but this may not be physiologically important. Probably plays a role in initiation of 16S rRNA degradation (leading to ribosome degradation) during starvation.</text>
</comment>
<comment type="catalytic activity">
    <reaction evidence="1">
        <text>tRNA(n+1) + phosphate = tRNA(n) + a ribonucleoside 5'-diphosphate</text>
        <dbReference type="Rhea" id="RHEA:10628"/>
        <dbReference type="Rhea" id="RHEA-COMP:17343"/>
        <dbReference type="Rhea" id="RHEA-COMP:17344"/>
        <dbReference type="ChEBI" id="CHEBI:43474"/>
        <dbReference type="ChEBI" id="CHEBI:57930"/>
        <dbReference type="ChEBI" id="CHEBI:173114"/>
        <dbReference type="EC" id="2.7.7.56"/>
    </reaction>
</comment>
<comment type="subunit">
    <text evidence="1">Homohexameric ring arranged as a trimer of dimers.</text>
</comment>
<comment type="similarity">
    <text evidence="1">Belongs to the RNase PH family.</text>
</comment>
<reference key="1">
    <citation type="submission" date="2008-10" db="EMBL/GenBank/DDBJ databases">
        <title>Genome sequence of Bacillus cereus G9842.</title>
        <authorList>
            <person name="Dodson R.J."/>
            <person name="Durkin A.S."/>
            <person name="Rosovitz M.J."/>
            <person name="Rasko D.A."/>
            <person name="Hoffmaster A."/>
            <person name="Ravel J."/>
            <person name="Sutton G."/>
        </authorList>
    </citation>
    <scope>NUCLEOTIDE SEQUENCE [LARGE SCALE GENOMIC DNA]</scope>
    <source>
        <strain>G9842</strain>
    </source>
</reference>